<gene>
    <name evidence="1" type="primary">rpsH</name>
    <name type="ordered locus">LMHCC_2916</name>
</gene>
<proteinExistence type="inferred from homology"/>
<feature type="chain" id="PRO_1000165337" description="Small ribosomal subunit protein uS8">
    <location>
        <begin position="1"/>
        <end position="132"/>
    </location>
</feature>
<sequence>MVMTDPIADFLTRIRNANMVKHDKLELPASKIKKEIAEILKREGFIRDVEYIEDDNAGTIRVFLKYGATGERVITGLKRISKPGLRVYAKSTEVPKVLNGLGIAIVSTSQGVLTDKEARAKQVGGEVLAYVW</sequence>
<organism>
    <name type="scientific">Listeria monocytogenes serotype 4a (strain HCC23)</name>
    <dbReference type="NCBI Taxonomy" id="552536"/>
    <lineage>
        <taxon>Bacteria</taxon>
        <taxon>Bacillati</taxon>
        <taxon>Bacillota</taxon>
        <taxon>Bacilli</taxon>
        <taxon>Bacillales</taxon>
        <taxon>Listeriaceae</taxon>
        <taxon>Listeria</taxon>
    </lineage>
</organism>
<protein>
    <recommendedName>
        <fullName evidence="1">Small ribosomal subunit protein uS8</fullName>
    </recommendedName>
    <alternativeName>
        <fullName evidence="2">30S ribosomal protein S8</fullName>
    </alternativeName>
</protein>
<comment type="function">
    <text evidence="1">One of the primary rRNA binding proteins, it binds directly to 16S rRNA central domain where it helps coordinate assembly of the platform of the 30S subunit.</text>
</comment>
<comment type="subunit">
    <text evidence="1">Part of the 30S ribosomal subunit. Contacts proteins S5 and S12.</text>
</comment>
<comment type="similarity">
    <text evidence="1">Belongs to the universal ribosomal protein uS8 family.</text>
</comment>
<reference key="1">
    <citation type="journal article" date="2011" name="J. Bacteriol.">
        <title>Genome sequence of lineage III Listeria monocytogenes strain HCC23.</title>
        <authorList>
            <person name="Steele C.L."/>
            <person name="Donaldson J.R."/>
            <person name="Paul D."/>
            <person name="Banes M.M."/>
            <person name="Arick T."/>
            <person name="Bridges S.M."/>
            <person name="Lawrence M.L."/>
        </authorList>
    </citation>
    <scope>NUCLEOTIDE SEQUENCE [LARGE SCALE GENOMIC DNA]</scope>
    <source>
        <strain>HCC23</strain>
    </source>
</reference>
<name>RS8_LISMH</name>
<keyword id="KW-0687">Ribonucleoprotein</keyword>
<keyword id="KW-0689">Ribosomal protein</keyword>
<keyword id="KW-0694">RNA-binding</keyword>
<keyword id="KW-0699">rRNA-binding</keyword>
<dbReference type="EMBL" id="CP001175">
    <property type="protein sequence ID" value="ACK41247.1"/>
    <property type="molecule type" value="Genomic_DNA"/>
</dbReference>
<dbReference type="RefSeq" id="WP_003720937.1">
    <property type="nucleotide sequence ID" value="NC_011660.1"/>
</dbReference>
<dbReference type="SMR" id="B8DB22"/>
<dbReference type="GeneID" id="93240499"/>
<dbReference type="KEGG" id="lmh:LMHCC_2916"/>
<dbReference type="HOGENOM" id="CLU_098428_0_2_9"/>
<dbReference type="GO" id="GO:1990904">
    <property type="term" value="C:ribonucleoprotein complex"/>
    <property type="evidence" value="ECO:0007669"/>
    <property type="project" value="UniProtKB-KW"/>
</dbReference>
<dbReference type="GO" id="GO:0005840">
    <property type="term" value="C:ribosome"/>
    <property type="evidence" value="ECO:0007669"/>
    <property type="project" value="UniProtKB-KW"/>
</dbReference>
<dbReference type="GO" id="GO:0019843">
    <property type="term" value="F:rRNA binding"/>
    <property type="evidence" value="ECO:0007669"/>
    <property type="project" value="UniProtKB-UniRule"/>
</dbReference>
<dbReference type="GO" id="GO:0003735">
    <property type="term" value="F:structural constituent of ribosome"/>
    <property type="evidence" value="ECO:0007669"/>
    <property type="project" value="InterPro"/>
</dbReference>
<dbReference type="GO" id="GO:0006412">
    <property type="term" value="P:translation"/>
    <property type="evidence" value="ECO:0007669"/>
    <property type="project" value="UniProtKB-UniRule"/>
</dbReference>
<dbReference type="FunFam" id="3.30.1370.30:FF:000002">
    <property type="entry name" value="30S ribosomal protein S8"/>
    <property type="match status" value="1"/>
</dbReference>
<dbReference type="FunFam" id="3.30.1490.10:FF:000001">
    <property type="entry name" value="30S ribosomal protein S8"/>
    <property type="match status" value="1"/>
</dbReference>
<dbReference type="Gene3D" id="3.30.1370.30">
    <property type="match status" value="1"/>
</dbReference>
<dbReference type="Gene3D" id="3.30.1490.10">
    <property type="match status" value="1"/>
</dbReference>
<dbReference type="HAMAP" id="MF_01302_B">
    <property type="entry name" value="Ribosomal_uS8_B"/>
    <property type="match status" value="1"/>
</dbReference>
<dbReference type="InterPro" id="IPR000630">
    <property type="entry name" value="Ribosomal_uS8"/>
</dbReference>
<dbReference type="InterPro" id="IPR047863">
    <property type="entry name" value="Ribosomal_uS8_CS"/>
</dbReference>
<dbReference type="InterPro" id="IPR035987">
    <property type="entry name" value="Ribosomal_uS8_sf"/>
</dbReference>
<dbReference type="NCBIfam" id="NF001109">
    <property type="entry name" value="PRK00136.1"/>
    <property type="match status" value="1"/>
</dbReference>
<dbReference type="PANTHER" id="PTHR11758">
    <property type="entry name" value="40S RIBOSOMAL PROTEIN S15A"/>
    <property type="match status" value="1"/>
</dbReference>
<dbReference type="Pfam" id="PF00410">
    <property type="entry name" value="Ribosomal_S8"/>
    <property type="match status" value="1"/>
</dbReference>
<dbReference type="SUPFAM" id="SSF56047">
    <property type="entry name" value="Ribosomal protein S8"/>
    <property type="match status" value="1"/>
</dbReference>
<dbReference type="PROSITE" id="PS00053">
    <property type="entry name" value="RIBOSOMAL_S8"/>
    <property type="match status" value="1"/>
</dbReference>
<accession>B8DB22</accession>
<evidence type="ECO:0000255" key="1">
    <source>
        <dbReference type="HAMAP-Rule" id="MF_01302"/>
    </source>
</evidence>
<evidence type="ECO:0000305" key="2"/>